<dbReference type="EMBL" id="CP000393">
    <property type="protein sequence ID" value="ABG50937.1"/>
    <property type="molecule type" value="Genomic_DNA"/>
</dbReference>
<dbReference type="EMBL" id="AF044318">
    <property type="protein sequence ID" value="AAC02683.1"/>
    <property type="molecule type" value="Genomic_DNA"/>
</dbReference>
<dbReference type="RefSeq" id="WP_011611312.1">
    <property type="nucleotide sequence ID" value="NC_008312.1"/>
</dbReference>
<dbReference type="SMR" id="O52659"/>
<dbReference type="STRING" id="203124.Tery_1666"/>
<dbReference type="KEGG" id="ter:Tery_1666"/>
<dbReference type="eggNOG" id="COG0716">
    <property type="taxonomic scope" value="Bacteria"/>
</dbReference>
<dbReference type="HOGENOM" id="CLU_051402_1_0_3"/>
<dbReference type="OrthoDB" id="9790745at2"/>
<dbReference type="GO" id="GO:0010181">
    <property type="term" value="F:FMN binding"/>
    <property type="evidence" value="ECO:0007669"/>
    <property type="project" value="InterPro"/>
</dbReference>
<dbReference type="Gene3D" id="3.40.50.360">
    <property type="match status" value="1"/>
</dbReference>
<dbReference type="InterPro" id="IPR050619">
    <property type="entry name" value="Flavodoxin"/>
</dbReference>
<dbReference type="InterPro" id="IPR008254">
    <property type="entry name" value="Flavodoxin/NO_synth"/>
</dbReference>
<dbReference type="InterPro" id="IPR010086">
    <property type="entry name" value="Flavodoxin_lc"/>
</dbReference>
<dbReference type="InterPro" id="IPR029039">
    <property type="entry name" value="Flavoprotein-like_sf"/>
</dbReference>
<dbReference type="NCBIfam" id="TIGR01752">
    <property type="entry name" value="flav_long"/>
    <property type="match status" value="1"/>
</dbReference>
<dbReference type="NCBIfam" id="NF006736">
    <property type="entry name" value="PRK09267.1-2"/>
    <property type="match status" value="1"/>
</dbReference>
<dbReference type="NCBIfam" id="NF006739">
    <property type="entry name" value="PRK09267.1-5"/>
    <property type="match status" value="1"/>
</dbReference>
<dbReference type="PANTHER" id="PTHR42809:SF1">
    <property type="entry name" value="FLAVODOXIN 1"/>
    <property type="match status" value="1"/>
</dbReference>
<dbReference type="PANTHER" id="PTHR42809">
    <property type="entry name" value="FLAVODOXIN 2"/>
    <property type="match status" value="1"/>
</dbReference>
<dbReference type="Pfam" id="PF00258">
    <property type="entry name" value="Flavodoxin_1"/>
    <property type="match status" value="1"/>
</dbReference>
<dbReference type="PIRSF" id="PIRSF038996">
    <property type="entry name" value="FldA"/>
    <property type="match status" value="1"/>
</dbReference>
<dbReference type="SUPFAM" id="SSF52218">
    <property type="entry name" value="Flavoproteins"/>
    <property type="match status" value="1"/>
</dbReference>
<dbReference type="PROSITE" id="PS50902">
    <property type="entry name" value="FLAVODOXIN_LIKE"/>
    <property type="match status" value="1"/>
</dbReference>
<protein>
    <recommendedName>
        <fullName>Flavodoxin</fullName>
    </recommendedName>
</protein>
<evidence type="ECO:0000250" key="1"/>
<evidence type="ECO:0000255" key="2">
    <source>
        <dbReference type="PROSITE-ProRule" id="PRU00088"/>
    </source>
</evidence>
<evidence type="ECO:0000305" key="3"/>
<keyword id="KW-0249">Electron transport</keyword>
<keyword id="KW-0285">Flavoprotein</keyword>
<keyword id="KW-0288">FMN</keyword>
<keyword id="KW-0813">Transport</keyword>
<gene>
    <name type="primary">fld</name>
    <name type="ordered locus">Tery_1666</name>
</gene>
<organism>
    <name type="scientific">Trichodesmium erythraeum (strain IMS101)</name>
    <dbReference type="NCBI Taxonomy" id="203124"/>
    <lineage>
        <taxon>Bacteria</taxon>
        <taxon>Bacillati</taxon>
        <taxon>Cyanobacteriota</taxon>
        <taxon>Cyanophyceae</taxon>
        <taxon>Oscillatoriophycideae</taxon>
        <taxon>Oscillatoriales</taxon>
        <taxon>Microcoleaceae</taxon>
        <taxon>Trichodesmium</taxon>
    </lineage>
</organism>
<name>FLAV_TRIEI</name>
<proteinExistence type="inferred from homology"/>
<reference key="1">
    <citation type="journal article" date="2015" name="Proc. Natl. Acad. Sci. U.S.A.">
        <title>Trichodesmium genome maintains abundant, widespread noncoding DNA in situ, despite oligotrophic lifestyle.</title>
        <authorList>
            <person name="Walworth N."/>
            <person name="Pfreundt U."/>
            <person name="Nelson W.C."/>
            <person name="Mincer T."/>
            <person name="Heidelberg J.F."/>
            <person name="Fu F."/>
            <person name="Waterbury J.B."/>
            <person name="Glavina del Rio T."/>
            <person name="Goodwin L."/>
            <person name="Kyrpides N.C."/>
            <person name="Land M.L."/>
            <person name="Woyke T."/>
            <person name="Hutchins D.A."/>
            <person name="Hess W.R."/>
            <person name="Webb E.A."/>
        </authorList>
    </citation>
    <scope>NUCLEOTIDE SEQUENCE [LARGE SCALE GENOMIC DNA]</scope>
    <source>
        <strain>IMS101</strain>
    </source>
</reference>
<reference key="2">
    <citation type="submission" date="1998-01" db="EMBL/GenBank/DDBJ databases">
        <title>Identification of a gene encoding flavodoxin in the marine cyanobacterium Trichodesmium.</title>
        <authorList>
            <person name="Lin S."/>
            <person name="Carpenter E.J."/>
        </authorList>
    </citation>
    <scope>NUCLEOTIDE SEQUENCE [GENOMIC DNA] OF 3-146</scope>
</reference>
<sequence>MSKIGLFVGTTTGKTEEAAEKIKEEFGGDDVVTIHDISEASPEDFDGYQNVIIGCPTWDVGELQSDWSGFYSEELDNVKFTGKKVAYFGTGDQIGYADNFQDAMGILEEKITGLGGTTIGSWSTEGYDHEDSKAVKNGKFVGLALDDDNQADLTDERIKEWVKQLKTEFGV</sequence>
<feature type="chain" id="PRO_0000171647" description="Flavodoxin">
    <location>
        <begin position="1"/>
        <end position="171"/>
    </location>
</feature>
<feature type="domain" description="Flavodoxin-like" evidence="2">
    <location>
        <begin position="4"/>
        <end position="166"/>
    </location>
</feature>
<feature type="sequence conflict" description="In Ref. 2; AAC02683." evidence="3" ref="2">
    <original>I</original>
    <variation>M</variation>
    <location>
        <position position="4"/>
    </location>
</feature>
<feature type="sequence conflict" description="In Ref. 2; AAC02683." evidence="3" ref="2">
    <original>V</original>
    <variation>F</variation>
    <location>
        <position position="8"/>
    </location>
</feature>
<feature type="sequence conflict" description="In Ref. 2; AAC02683." evidence="3" ref="2">
    <original>E</original>
    <variation>V</variation>
    <location>
        <position position="130"/>
    </location>
</feature>
<comment type="function">
    <text evidence="1">Low-potential electron donor to a number of redox enzymes.</text>
</comment>
<comment type="cofactor">
    <cofactor evidence="1">
        <name>FMN</name>
        <dbReference type="ChEBI" id="CHEBI:58210"/>
    </cofactor>
</comment>
<comment type="similarity">
    <text evidence="3">Belongs to the flavodoxin family.</text>
</comment>
<accession>O52659</accession>
<accession>Q114Y7</accession>